<accession>A6QIC9</accession>
<reference key="1">
    <citation type="journal article" date="2008" name="J. Bacteriol.">
        <title>Genome sequence of Staphylococcus aureus strain Newman and comparative analysis of staphylococcal genomes: polymorphism and evolution of two major pathogenicity islands.</title>
        <authorList>
            <person name="Baba T."/>
            <person name="Bae T."/>
            <person name="Schneewind O."/>
            <person name="Takeuchi F."/>
            <person name="Hiramatsu K."/>
        </authorList>
    </citation>
    <scope>NUCLEOTIDE SEQUENCE [LARGE SCALE GENOMIC DNA]</scope>
    <source>
        <strain>Newman</strain>
    </source>
</reference>
<keyword id="KW-0067">ATP-binding</keyword>
<keyword id="KW-0436">Ligase</keyword>
<keyword id="KW-0547">Nucleotide-binding</keyword>
<keyword id="KW-0648">Protein biosynthesis</keyword>
<feature type="chain" id="PRO_1000071391" description="Aspartyl/glutamyl-tRNA(Asn/Gln) amidotransferase subunit C">
    <location>
        <begin position="1"/>
        <end position="100"/>
    </location>
</feature>
<protein>
    <recommendedName>
        <fullName evidence="1">Aspartyl/glutamyl-tRNA(Asn/Gln) amidotransferase subunit C</fullName>
        <shortName evidence="1">Asp/Glu-ADT subunit C</shortName>
        <ecNumber evidence="1">6.3.5.-</ecNumber>
    </recommendedName>
</protein>
<proteinExistence type="inferred from homology"/>
<name>GATC_STAAE</name>
<evidence type="ECO:0000255" key="1">
    <source>
        <dbReference type="HAMAP-Rule" id="MF_00122"/>
    </source>
</evidence>
<sequence>MTKVTREEVEHIANLARLQISPEETEEMANTLESILDFAKQNDSADTEGVEPTYHVLDLQNVLREDKAIKGIPQELALKNAKETEDGQFKVPTIMNEEDL</sequence>
<gene>
    <name evidence="1" type="primary">gatC</name>
    <name type="ordered locus">NWMN_1839</name>
</gene>
<dbReference type="EC" id="6.3.5.-" evidence="1"/>
<dbReference type="EMBL" id="AP009351">
    <property type="protein sequence ID" value="BAF68111.1"/>
    <property type="molecule type" value="Genomic_DNA"/>
</dbReference>
<dbReference type="RefSeq" id="WP_000170163.1">
    <property type="nucleotide sequence ID" value="NZ_JBBIAE010000010.1"/>
</dbReference>
<dbReference type="SMR" id="A6QIC9"/>
<dbReference type="KEGG" id="sae:NWMN_1839"/>
<dbReference type="HOGENOM" id="CLU_105899_6_1_9"/>
<dbReference type="Proteomes" id="UP000006386">
    <property type="component" value="Chromosome"/>
</dbReference>
<dbReference type="GO" id="GO:0050566">
    <property type="term" value="F:asparaginyl-tRNA synthase (glutamine-hydrolyzing) activity"/>
    <property type="evidence" value="ECO:0007669"/>
    <property type="project" value="RHEA"/>
</dbReference>
<dbReference type="GO" id="GO:0005524">
    <property type="term" value="F:ATP binding"/>
    <property type="evidence" value="ECO:0007669"/>
    <property type="project" value="UniProtKB-KW"/>
</dbReference>
<dbReference type="GO" id="GO:0050567">
    <property type="term" value="F:glutaminyl-tRNA synthase (glutamine-hydrolyzing) activity"/>
    <property type="evidence" value="ECO:0007669"/>
    <property type="project" value="UniProtKB-UniRule"/>
</dbReference>
<dbReference type="GO" id="GO:0070681">
    <property type="term" value="P:glutaminyl-tRNAGln biosynthesis via transamidation"/>
    <property type="evidence" value="ECO:0007669"/>
    <property type="project" value="TreeGrafter"/>
</dbReference>
<dbReference type="GO" id="GO:0006450">
    <property type="term" value="P:regulation of translational fidelity"/>
    <property type="evidence" value="ECO:0007669"/>
    <property type="project" value="InterPro"/>
</dbReference>
<dbReference type="GO" id="GO:0006412">
    <property type="term" value="P:translation"/>
    <property type="evidence" value="ECO:0007669"/>
    <property type="project" value="UniProtKB-UniRule"/>
</dbReference>
<dbReference type="Gene3D" id="1.10.20.60">
    <property type="entry name" value="Glu-tRNAGln amidotransferase C subunit, N-terminal domain"/>
    <property type="match status" value="1"/>
</dbReference>
<dbReference type="HAMAP" id="MF_00122">
    <property type="entry name" value="GatC"/>
    <property type="match status" value="1"/>
</dbReference>
<dbReference type="InterPro" id="IPR036113">
    <property type="entry name" value="Asp/Glu-ADT_sf_sub_c"/>
</dbReference>
<dbReference type="InterPro" id="IPR003837">
    <property type="entry name" value="GatC"/>
</dbReference>
<dbReference type="NCBIfam" id="TIGR00135">
    <property type="entry name" value="gatC"/>
    <property type="match status" value="1"/>
</dbReference>
<dbReference type="PANTHER" id="PTHR15004">
    <property type="entry name" value="GLUTAMYL-TRNA(GLN) AMIDOTRANSFERASE SUBUNIT C, MITOCHONDRIAL"/>
    <property type="match status" value="1"/>
</dbReference>
<dbReference type="PANTHER" id="PTHR15004:SF0">
    <property type="entry name" value="GLUTAMYL-TRNA(GLN) AMIDOTRANSFERASE SUBUNIT C, MITOCHONDRIAL"/>
    <property type="match status" value="1"/>
</dbReference>
<dbReference type="Pfam" id="PF02686">
    <property type="entry name" value="GatC"/>
    <property type="match status" value="1"/>
</dbReference>
<dbReference type="SUPFAM" id="SSF141000">
    <property type="entry name" value="Glu-tRNAGln amidotransferase C subunit"/>
    <property type="match status" value="1"/>
</dbReference>
<organism>
    <name type="scientific">Staphylococcus aureus (strain Newman)</name>
    <dbReference type="NCBI Taxonomy" id="426430"/>
    <lineage>
        <taxon>Bacteria</taxon>
        <taxon>Bacillati</taxon>
        <taxon>Bacillota</taxon>
        <taxon>Bacilli</taxon>
        <taxon>Bacillales</taxon>
        <taxon>Staphylococcaceae</taxon>
        <taxon>Staphylococcus</taxon>
    </lineage>
</organism>
<comment type="function">
    <text evidence="1">Allows the formation of correctly charged Asn-tRNA(Asn) or Gln-tRNA(Gln) through the transamidation of misacylated Asp-tRNA(Asn) or Glu-tRNA(Gln) in organisms which lack either or both of asparaginyl-tRNA or glutaminyl-tRNA synthetases. The reaction takes place in the presence of glutamine and ATP through an activated phospho-Asp-tRNA(Asn) or phospho-Glu-tRNA(Gln).</text>
</comment>
<comment type="catalytic activity">
    <reaction evidence="1">
        <text>L-glutamyl-tRNA(Gln) + L-glutamine + ATP + H2O = L-glutaminyl-tRNA(Gln) + L-glutamate + ADP + phosphate + H(+)</text>
        <dbReference type="Rhea" id="RHEA:17521"/>
        <dbReference type="Rhea" id="RHEA-COMP:9681"/>
        <dbReference type="Rhea" id="RHEA-COMP:9684"/>
        <dbReference type="ChEBI" id="CHEBI:15377"/>
        <dbReference type="ChEBI" id="CHEBI:15378"/>
        <dbReference type="ChEBI" id="CHEBI:29985"/>
        <dbReference type="ChEBI" id="CHEBI:30616"/>
        <dbReference type="ChEBI" id="CHEBI:43474"/>
        <dbReference type="ChEBI" id="CHEBI:58359"/>
        <dbReference type="ChEBI" id="CHEBI:78520"/>
        <dbReference type="ChEBI" id="CHEBI:78521"/>
        <dbReference type="ChEBI" id="CHEBI:456216"/>
    </reaction>
</comment>
<comment type="catalytic activity">
    <reaction evidence="1">
        <text>L-aspartyl-tRNA(Asn) + L-glutamine + ATP + H2O = L-asparaginyl-tRNA(Asn) + L-glutamate + ADP + phosphate + 2 H(+)</text>
        <dbReference type="Rhea" id="RHEA:14513"/>
        <dbReference type="Rhea" id="RHEA-COMP:9674"/>
        <dbReference type="Rhea" id="RHEA-COMP:9677"/>
        <dbReference type="ChEBI" id="CHEBI:15377"/>
        <dbReference type="ChEBI" id="CHEBI:15378"/>
        <dbReference type="ChEBI" id="CHEBI:29985"/>
        <dbReference type="ChEBI" id="CHEBI:30616"/>
        <dbReference type="ChEBI" id="CHEBI:43474"/>
        <dbReference type="ChEBI" id="CHEBI:58359"/>
        <dbReference type="ChEBI" id="CHEBI:78515"/>
        <dbReference type="ChEBI" id="CHEBI:78516"/>
        <dbReference type="ChEBI" id="CHEBI:456216"/>
    </reaction>
</comment>
<comment type="subunit">
    <text evidence="1">Heterotrimer of A, B and C subunits.</text>
</comment>
<comment type="similarity">
    <text evidence="1">Belongs to the GatC family.</text>
</comment>